<comment type="function">
    <text evidence="1">Has a role in the initiation of DNA replication. Required at S-phase checkpoint (By similarity).</text>
</comment>
<comment type="subcellular location">
    <subcellularLocation>
        <location>Cytoplasm</location>
    </subcellularLocation>
    <subcellularLocation>
        <location evidence="1">Nucleus</location>
    </subcellularLocation>
</comment>
<comment type="similarity">
    <text evidence="3">Belongs to the SLD2 family.</text>
</comment>
<accession>Q6FME9</accession>
<reference key="1">
    <citation type="journal article" date="2004" name="Nature">
        <title>Genome evolution in yeasts.</title>
        <authorList>
            <person name="Dujon B."/>
            <person name="Sherman D."/>
            <person name="Fischer G."/>
            <person name="Durrens P."/>
            <person name="Casaregola S."/>
            <person name="Lafontaine I."/>
            <person name="de Montigny J."/>
            <person name="Marck C."/>
            <person name="Neuveglise C."/>
            <person name="Talla E."/>
            <person name="Goffard N."/>
            <person name="Frangeul L."/>
            <person name="Aigle M."/>
            <person name="Anthouard V."/>
            <person name="Babour A."/>
            <person name="Barbe V."/>
            <person name="Barnay S."/>
            <person name="Blanchin S."/>
            <person name="Beckerich J.-M."/>
            <person name="Beyne E."/>
            <person name="Bleykasten C."/>
            <person name="Boisrame A."/>
            <person name="Boyer J."/>
            <person name="Cattolico L."/>
            <person name="Confanioleri F."/>
            <person name="de Daruvar A."/>
            <person name="Despons L."/>
            <person name="Fabre E."/>
            <person name="Fairhead C."/>
            <person name="Ferry-Dumazet H."/>
            <person name="Groppi A."/>
            <person name="Hantraye F."/>
            <person name="Hennequin C."/>
            <person name="Jauniaux N."/>
            <person name="Joyet P."/>
            <person name="Kachouri R."/>
            <person name="Kerrest A."/>
            <person name="Koszul R."/>
            <person name="Lemaire M."/>
            <person name="Lesur I."/>
            <person name="Ma L."/>
            <person name="Muller H."/>
            <person name="Nicaud J.-M."/>
            <person name="Nikolski M."/>
            <person name="Oztas S."/>
            <person name="Ozier-Kalogeropoulos O."/>
            <person name="Pellenz S."/>
            <person name="Potier S."/>
            <person name="Richard G.-F."/>
            <person name="Straub M.-L."/>
            <person name="Suleau A."/>
            <person name="Swennen D."/>
            <person name="Tekaia F."/>
            <person name="Wesolowski-Louvel M."/>
            <person name="Westhof E."/>
            <person name="Wirth B."/>
            <person name="Zeniou-Meyer M."/>
            <person name="Zivanovic Y."/>
            <person name="Bolotin-Fukuhara M."/>
            <person name="Thierry A."/>
            <person name="Bouchier C."/>
            <person name="Caudron B."/>
            <person name="Scarpelli C."/>
            <person name="Gaillardin C."/>
            <person name="Weissenbach J."/>
            <person name="Wincker P."/>
            <person name="Souciet J.-L."/>
        </authorList>
    </citation>
    <scope>NUCLEOTIDE SEQUENCE [LARGE SCALE GENOMIC DNA]</scope>
    <source>
        <strain>ATCC 2001 / BCRC 20586 / JCM 3761 / NBRC 0622 / NRRL Y-65 / CBS 138</strain>
    </source>
</reference>
<dbReference type="EMBL" id="CR380957">
    <property type="protein sequence ID" value="CAG61558.1"/>
    <property type="molecule type" value="Genomic_DNA"/>
</dbReference>
<dbReference type="RefSeq" id="XP_448595.1">
    <property type="nucleotide sequence ID" value="XM_448595.1"/>
</dbReference>
<dbReference type="SMR" id="Q6FME9"/>
<dbReference type="FunCoup" id="Q6FME9">
    <property type="interactions" value="60"/>
</dbReference>
<dbReference type="EnsemblFungi" id="CAGL0K08602g-T">
    <property type="protein sequence ID" value="CAGL0K08602g-T-p1"/>
    <property type="gene ID" value="CAGL0K08602g"/>
</dbReference>
<dbReference type="KEGG" id="cgr:2890322"/>
<dbReference type="CGD" id="CAL0134727">
    <property type="gene designation" value="CAGL0K08602g"/>
</dbReference>
<dbReference type="VEuPathDB" id="FungiDB:CAGL0K08602g"/>
<dbReference type="eggNOG" id="ENOG502SCF7">
    <property type="taxonomic scope" value="Eukaryota"/>
</dbReference>
<dbReference type="HOGENOM" id="CLU_057728_0_0_1"/>
<dbReference type="InParanoid" id="Q6FME9"/>
<dbReference type="OMA" id="TWEHDFI"/>
<dbReference type="Proteomes" id="UP000002428">
    <property type="component" value="Chromosome K"/>
</dbReference>
<dbReference type="GO" id="GO:0005737">
    <property type="term" value="C:cytoplasm"/>
    <property type="evidence" value="ECO:0007669"/>
    <property type="project" value="UniProtKB-SubCell"/>
</dbReference>
<dbReference type="GO" id="GO:0031261">
    <property type="term" value="C:DNA replication preinitiation complex"/>
    <property type="evidence" value="ECO:0007669"/>
    <property type="project" value="EnsemblFungi"/>
</dbReference>
<dbReference type="GO" id="GO:0003688">
    <property type="term" value="F:DNA replication origin binding"/>
    <property type="evidence" value="ECO:0007669"/>
    <property type="project" value="EnsemblFungi"/>
</dbReference>
<dbReference type="GO" id="GO:0003697">
    <property type="term" value="F:single-stranded DNA binding"/>
    <property type="evidence" value="ECO:0007669"/>
    <property type="project" value="EnsemblFungi"/>
</dbReference>
<dbReference type="GO" id="GO:0006270">
    <property type="term" value="P:DNA replication initiation"/>
    <property type="evidence" value="ECO:0007669"/>
    <property type="project" value="EnsemblFungi"/>
</dbReference>
<dbReference type="GO" id="GO:0000727">
    <property type="term" value="P:double-strand break repair via break-induced replication"/>
    <property type="evidence" value="ECO:0007669"/>
    <property type="project" value="EnsemblFungi"/>
</dbReference>
<dbReference type="GO" id="GO:0033314">
    <property type="term" value="P:mitotic DNA replication checkpoint signaling"/>
    <property type="evidence" value="ECO:0007669"/>
    <property type="project" value="EnsemblFungi"/>
</dbReference>
<dbReference type="GO" id="GO:1902977">
    <property type="term" value="P:mitotic DNA replication preinitiation complex assembly"/>
    <property type="evidence" value="ECO:0007669"/>
    <property type="project" value="TreeGrafter"/>
</dbReference>
<dbReference type="GO" id="GO:0031333">
    <property type="term" value="P:negative regulation of protein-containing complex assembly"/>
    <property type="evidence" value="ECO:0007669"/>
    <property type="project" value="EnsemblFungi"/>
</dbReference>
<dbReference type="CDD" id="cd22289">
    <property type="entry name" value="RecQL4_SLD2_NTD"/>
    <property type="match status" value="1"/>
</dbReference>
<dbReference type="Gene3D" id="1.10.10.1460">
    <property type="match status" value="1"/>
</dbReference>
<dbReference type="InterPro" id="IPR021110">
    <property type="entry name" value="DNA_rep_checkpnt_protein"/>
</dbReference>
<dbReference type="InterPro" id="IPR040203">
    <property type="entry name" value="Sld2"/>
</dbReference>
<dbReference type="PANTHER" id="PTHR28124">
    <property type="entry name" value="DNA REPLICATION REGULATOR SLD2"/>
    <property type="match status" value="1"/>
</dbReference>
<dbReference type="PANTHER" id="PTHR28124:SF1">
    <property type="entry name" value="DNA REPLICATION REGULATOR SLD2"/>
    <property type="match status" value="1"/>
</dbReference>
<dbReference type="Pfam" id="PF11719">
    <property type="entry name" value="Drc1-Sld2"/>
    <property type="match status" value="1"/>
</dbReference>
<proteinExistence type="inferred from homology"/>
<sequence>MDMDVQQVKLKIKRWEHAFIAEHNRPPDKDDIRPLTEMKQLYKLYSVLKSKERKAEPIQKQQTPRKDSNMVLGPTPQIYGKAVSIFEMKVSPLKVEETPTTEVEEDIESEIESSVNRRNSDEASANEEKLGIHSVKKRLFESPKKTENTTHLAVPQVTRYGPNSPLKLAQTVSIRQHLLTPKKKKAEPKSLYTPSPLLKRNSSKTLYELAHEHLQYVEEIKELDQQFKSEIVPIRHGNGQDIGDESDEVPEKKKRRTGVLRRLQFDEDENDRTIKKDLHKELLKLKSRKVKEFLGKEDNEPSEEEEEEQQKSEPLPVKKKKPKKYNLVSNNFRRLKLPKKNRNPRFGRRR</sequence>
<name>SLD2_CANGA</name>
<organism>
    <name type="scientific">Candida glabrata (strain ATCC 2001 / BCRC 20586 / JCM 3761 / NBRC 0622 / NRRL Y-65 / CBS 138)</name>
    <name type="common">Yeast</name>
    <name type="synonym">Nakaseomyces glabratus</name>
    <dbReference type="NCBI Taxonomy" id="284593"/>
    <lineage>
        <taxon>Eukaryota</taxon>
        <taxon>Fungi</taxon>
        <taxon>Dikarya</taxon>
        <taxon>Ascomycota</taxon>
        <taxon>Saccharomycotina</taxon>
        <taxon>Saccharomycetes</taxon>
        <taxon>Saccharomycetales</taxon>
        <taxon>Saccharomycetaceae</taxon>
        <taxon>Nakaseomyces</taxon>
    </lineage>
</organism>
<protein>
    <recommendedName>
        <fullName>DNA replication regulator SLD2</fullName>
    </recommendedName>
</protein>
<feature type="chain" id="PRO_0000278432" description="DNA replication regulator SLD2">
    <location>
        <begin position="1"/>
        <end position="350"/>
    </location>
</feature>
<feature type="region of interest" description="Disordered" evidence="2">
    <location>
        <begin position="52"/>
        <end position="73"/>
    </location>
</feature>
<feature type="region of interest" description="Disordered" evidence="2">
    <location>
        <begin position="97"/>
        <end position="128"/>
    </location>
</feature>
<feature type="region of interest" description="Disordered" evidence="2">
    <location>
        <begin position="234"/>
        <end position="255"/>
    </location>
</feature>
<feature type="region of interest" description="Disordered" evidence="2">
    <location>
        <begin position="290"/>
        <end position="350"/>
    </location>
</feature>
<feature type="compositionally biased region" description="Acidic residues" evidence="2">
    <location>
        <begin position="102"/>
        <end position="111"/>
    </location>
</feature>
<feature type="compositionally biased region" description="Basic and acidic residues" evidence="2">
    <location>
        <begin position="118"/>
        <end position="128"/>
    </location>
</feature>
<feature type="compositionally biased region" description="Basic and acidic residues" evidence="2">
    <location>
        <begin position="290"/>
        <end position="299"/>
    </location>
</feature>
<feature type="compositionally biased region" description="Basic residues" evidence="2">
    <location>
        <begin position="333"/>
        <end position="350"/>
    </location>
</feature>
<gene>
    <name type="primary">SLD2</name>
    <name type="ordered locus">CAGL0K08602g</name>
</gene>
<keyword id="KW-0131">Cell cycle</keyword>
<keyword id="KW-0963">Cytoplasm</keyword>
<keyword id="KW-0235">DNA replication</keyword>
<keyword id="KW-0539">Nucleus</keyword>
<keyword id="KW-1185">Reference proteome</keyword>
<evidence type="ECO:0000250" key="1"/>
<evidence type="ECO:0000256" key="2">
    <source>
        <dbReference type="SAM" id="MobiDB-lite"/>
    </source>
</evidence>
<evidence type="ECO:0000305" key="3"/>